<gene>
    <name evidence="1" type="primary">truB</name>
    <name type="ordered locus">SPs1087</name>
</gene>
<accession>P0DD49</accession>
<accession>Q878P4</accession>
<accession>Q8K7B8</accession>
<proteinExistence type="inferred from homology"/>
<evidence type="ECO:0000255" key="1">
    <source>
        <dbReference type="HAMAP-Rule" id="MF_01080"/>
    </source>
</evidence>
<organism>
    <name type="scientific">Streptococcus pyogenes serotype M3 (strain SSI-1)</name>
    <dbReference type="NCBI Taxonomy" id="193567"/>
    <lineage>
        <taxon>Bacteria</taxon>
        <taxon>Bacillati</taxon>
        <taxon>Bacillota</taxon>
        <taxon>Bacilli</taxon>
        <taxon>Lactobacillales</taxon>
        <taxon>Streptococcaceae</taxon>
        <taxon>Streptococcus</taxon>
    </lineage>
</organism>
<name>TRUB_STRPQ</name>
<keyword id="KW-0413">Isomerase</keyword>
<keyword id="KW-0819">tRNA processing</keyword>
<sequence length="294" mass="32315">MINGIINLKKEAGMTSHDAVFKLRKLLQEKKIGHGGTLDPDVVGVLPIAVGKATRVIEYMTEAGKVYEGQVTLGYSTTTEDASGEVVARSSLPAVLTEELVDQTMTTFLGKITQTPPMYSAVKVNGRKLYEYARAGESVERPRREVTISLFERTSPLNFTEDGLCRFSFKVACGKGTYVRTLAVDLGRALGVESHMSFLQRSASAGLTLETAYTLGEIADMVSKQEMSFLLPIEYGVADLPKMVIDDTELTEISFGRRLSLPSQEPLLAAFHGEKVIAILEKRDQEYKPKKVLI</sequence>
<comment type="function">
    <text evidence="1">Responsible for synthesis of pseudouridine from uracil-55 in the psi GC loop of transfer RNAs.</text>
</comment>
<comment type="catalytic activity">
    <reaction evidence="1">
        <text>uridine(55) in tRNA = pseudouridine(55) in tRNA</text>
        <dbReference type="Rhea" id="RHEA:42532"/>
        <dbReference type="Rhea" id="RHEA-COMP:10101"/>
        <dbReference type="Rhea" id="RHEA-COMP:10102"/>
        <dbReference type="ChEBI" id="CHEBI:65314"/>
        <dbReference type="ChEBI" id="CHEBI:65315"/>
        <dbReference type="EC" id="5.4.99.25"/>
    </reaction>
</comment>
<comment type="similarity">
    <text evidence="1">Belongs to the pseudouridine synthase TruB family. Type 1 subfamily.</text>
</comment>
<dbReference type="EC" id="5.4.99.25" evidence="1"/>
<dbReference type="EMBL" id="BA000034">
    <property type="protein sequence ID" value="BAC64182.1"/>
    <property type="molecule type" value="Genomic_DNA"/>
</dbReference>
<dbReference type="RefSeq" id="WP_011054534.1">
    <property type="nucleotide sequence ID" value="NC_004606.1"/>
</dbReference>
<dbReference type="SMR" id="P0DD49"/>
<dbReference type="KEGG" id="sps:SPs1087"/>
<dbReference type="HOGENOM" id="CLU_032087_0_1_9"/>
<dbReference type="GO" id="GO:0003723">
    <property type="term" value="F:RNA binding"/>
    <property type="evidence" value="ECO:0007669"/>
    <property type="project" value="InterPro"/>
</dbReference>
<dbReference type="GO" id="GO:0160148">
    <property type="term" value="F:tRNA pseudouridine(55) synthase activity"/>
    <property type="evidence" value="ECO:0007669"/>
    <property type="project" value="UniProtKB-EC"/>
</dbReference>
<dbReference type="GO" id="GO:1990481">
    <property type="term" value="P:mRNA pseudouridine synthesis"/>
    <property type="evidence" value="ECO:0007669"/>
    <property type="project" value="TreeGrafter"/>
</dbReference>
<dbReference type="GO" id="GO:0031119">
    <property type="term" value="P:tRNA pseudouridine synthesis"/>
    <property type="evidence" value="ECO:0007669"/>
    <property type="project" value="UniProtKB-UniRule"/>
</dbReference>
<dbReference type="CDD" id="cd02573">
    <property type="entry name" value="PseudoU_synth_EcTruB"/>
    <property type="match status" value="1"/>
</dbReference>
<dbReference type="FunFam" id="3.30.2350.10:FF:000011">
    <property type="entry name" value="tRNA pseudouridine synthase B"/>
    <property type="match status" value="1"/>
</dbReference>
<dbReference type="Gene3D" id="3.30.2350.10">
    <property type="entry name" value="Pseudouridine synthase"/>
    <property type="match status" value="1"/>
</dbReference>
<dbReference type="HAMAP" id="MF_01080">
    <property type="entry name" value="TruB_bact"/>
    <property type="match status" value="1"/>
</dbReference>
<dbReference type="InterPro" id="IPR020103">
    <property type="entry name" value="PsdUridine_synth_cat_dom_sf"/>
</dbReference>
<dbReference type="InterPro" id="IPR002501">
    <property type="entry name" value="PsdUridine_synth_N"/>
</dbReference>
<dbReference type="InterPro" id="IPR014780">
    <property type="entry name" value="tRNA_psdUridine_synth_TruB"/>
</dbReference>
<dbReference type="InterPro" id="IPR032819">
    <property type="entry name" value="TruB_C"/>
</dbReference>
<dbReference type="NCBIfam" id="TIGR00431">
    <property type="entry name" value="TruB"/>
    <property type="match status" value="1"/>
</dbReference>
<dbReference type="PANTHER" id="PTHR13767:SF2">
    <property type="entry name" value="PSEUDOURIDYLATE SYNTHASE TRUB1"/>
    <property type="match status" value="1"/>
</dbReference>
<dbReference type="PANTHER" id="PTHR13767">
    <property type="entry name" value="TRNA-PSEUDOURIDINE SYNTHASE"/>
    <property type="match status" value="1"/>
</dbReference>
<dbReference type="Pfam" id="PF16198">
    <property type="entry name" value="TruB_C_2"/>
    <property type="match status" value="1"/>
</dbReference>
<dbReference type="Pfam" id="PF01509">
    <property type="entry name" value="TruB_N"/>
    <property type="match status" value="1"/>
</dbReference>
<dbReference type="SUPFAM" id="SSF55120">
    <property type="entry name" value="Pseudouridine synthase"/>
    <property type="match status" value="1"/>
</dbReference>
<feature type="chain" id="PRO_0000411464" description="tRNA pseudouridine synthase B">
    <location>
        <begin position="1"/>
        <end position="294"/>
    </location>
</feature>
<feature type="active site" description="Nucleophile" evidence="1">
    <location>
        <position position="39"/>
    </location>
</feature>
<reference key="1">
    <citation type="journal article" date="2003" name="Genome Res.">
        <title>Genome sequence of an M3 strain of Streptococcus pyogenes reveals a large-scale genomic rearrangement in invasive strains and new insights into phage evolution.</title>
        <authorList>
            <person name="Nakagawa I."/>
            <person name="Kurokawa K."/>
            <person name="Yamashita A."/>
            <person name="Nakata M."/>
            <person name="Tomiyasu Y."/>
            <person name="Okahashi N."/>
            <person name="Kawabata S."/>
            <person name="Yamazaki K."/>
            <person name="Shiba T."/>
            <person name="Yasunaga T."/>
            <person name="Hayashi H."/>
            <person name="Hattori M."/>
            <person name="Hamada S."/>
        </authorList>
    </citation>
    <scope>NUCLEOTIDE SEQUENCE [LARGE SCALE GENOMIC DNA]</scope>
    <source>
        <strain>SSI-1</strain>
    </source>
</reference>
<protein>
    <recommendedName>
        <fullName evidence="1">tRNA pseudouridine synthase B</fullName>
        <ecNumber evidence="1">5.4.99.25</ecNumber>
    </recommendedName>
    <alternativeName>
        <fullName evidence="1">tRNA pseudouridine(55) synthase</fullName>
        <shortName evidence="1">Psi55 synthase</shortName>
    </alternativeName>
    <alternativeName>
        <fullName evidence="1">tRNA pseudouridylate synthase</fullName>
    </alternativeName>
    <alternativeName>
        <fullName evidence="1">tRNA-uridine isomerase</fullName>
    </alternativeName>
</protein>